<accession>B5YPZ4</accession>
<gene>
    <name evidence="1" type="primary">ydiU</name>
    <name evidence="1" type="synonym">selO</name>
    <name type="ordered locus">ECH74115_2424</name>
</gene>
<feature type="chain" id="PRO_1000132106" description="Protein nucleotidyltransferase YdiU">
    <location>
        <begin position="1"/>
        <end position="478"/>
    </location>
</feature>
<feature type="active site" description="Proton acceptor" evidence="1">
    <location>
        <position position="246"/>
    </location>
</feature>
<feature type="binding site" evidence="1">
    <location>
        <position position="84"/>
    </location>
    <ligand>
        <name>ATP</name>
        <dbReference type="ChEBI" id="CHEBI:30616"/>
    </ligand>
</feature>
<feature type="binding site" evidence="1">
    <location>
        <position position="86"/>
    </location>
    <ligand>
        <name>ATP</name>
        <dbReference type="ChEBI" id="CHEBI:30616"/>
    </ligand>
</feature>
<feature type="binding site" evidence="1">
    <location>
        <position position="87"/>
    </location>
    <ligand>
        <name>ATP</name>
        <dbReference type="ChEBI" id="CHEBI:30616"/>
    </ligand>
</feature>
<feature type="binding site" evidence="1">
    <location>
        <position position="107"/>
    </location>
    <ligand>
        <name>ATP</name>
        <dbReference type="ChEBI" id="CHEBI:30616"/>
    </ligand>
</feature>
<feature type="binding site" evidence="1">
    <location>
        <position position="119"/>
    </location>
    <ligand>
        <name>ATP</name>
        <dbReference type="ChEBI" id="CHEBI:30616"/>
    </ligand>
</feature>
<feature type="binding site" evidence="1">
    <location>
        <position position="120"/>
    </location>
    <ligand>
        <name>ATP</name>
        <dbReference type="ChEBI" id="CHEBI:30616"/>
    </ligand>
</feature>
<feature type="binding site" evidence="1">
    <location>
        <position position="170"/>
    </location>
    <ligand>
        <name>ATP</name>
        <dbReference type="ChEBI" id="CHEBI:30616"/>
    </ligand>
</feature>
<feature type="binding site" evidence="1">
    <location>
        <position position="177"/>
    </location>
    <ligand>
        <name>ATP</name>
        <dbReference type="ChEBI" id="CHEBI:30616"/>
    </ligand>
</feature>
<feature type="binding site" evidence="1">
    <location>
        <position position="247"/>
    </location>
    <ligand>
        <name>Mg(2+)</name>
        <dbReference type="ChEBI" id="CHEBI:18420"/>
    </ligand>
</feature>
<feature type="binding site" evidence="1">
    <location>
        <position position="256"/>
    </location>
    <ligand>
        <name>ATP</name>
        <dbReference type="ChEBI" id="CHEBI:30616"/>
    </ligand>
</feature>
<feature type="binding site" evidence="1">
    <location>
        <position position="256"/>
    </location>
    <ligand>
        <name>Mg(2+)</name>
        <dbReference type="ChEBI" id="CHEBI:18420"/>
    </ligand>
</feature>
<protein>
    <recommendedName>
        <fullName evidence="1">Protein nucleotidyltransferase YdiU</fullName>
        <ecNumber evidence="1">2.7.7.-</ecNumber>
    </recommendedName>
    <alternativeName>
        <fullName evidence="1">Protein adenylyltransferase YdiU</fullName>
        <ecNumber evidence="1">2.7.7.108</ecNumber>
    </alternativeName>
    <alternativeName>
        <fullName evidence="1">Protein uridylyltransferase YdiU</fullName>
        <ecNumber evidence="1">2.7.7.-</ecNumber>
    </alternativeName>
</protein>
<dbReference type="EC" id="2.7.7.-" evidence="1"/>
<dbReference type="EC" id="2.7.7.108" evidence="1"/>
<dbReference type="EMBL" id="CP001164">
    <property type="protein sequence ID" value="ACI37188.1"/>
    <property type="molecule type" value="Genomic_DNA"/>
</dbReference>
<dbReference type="RefSeq" id="WP_000175641.1">
    <property type="nucleotide sequence ID" value="NC_011353.1"/>
</dbReference>
<dbReference type="SMR" id="B5YPZ4"/>
<dbReference type="KEGG" id="ecf:ECH74115_2424"/>
<dbReference type="HOGENOM" id="CLU_010245_4_0_6"/>
<dbReference type="GO" id="GO:0070733">
    <property type="term" value="F:AMPylase activity"/>
    <property type="evidence" value="ECO:0007669"/>
    <property type="project" value="RHEA"/>
</dbReference>
<dbReference type="GO" id="GO:0005524">
    <property type="term" value="F:ATP binding"/>
    <property type="evidence" value="ECO:0007669"/>
    <property type="project" value="UniProtKB-UniRule"/>
</dbReference>
<dbReference type="GO" id="GO:0000287">
    <property type="term" value="F:magnesium ion binding"/>
    <property type="evidence" value="ECO:0007669"/>
    <property type="project" value="UniProtKB-UniRule"/>
</dbReference>
<dbReference type="HAMAP" id="MF_00692">
    <property type="entry name" value="YdiU_SelO"/>
    <property type="match status" value="1"/>
</dbReference>
<dbReference type="InterPro" id="IPR054838">
    <property type="entry name" value="adnlytase_SelO"/>
</dbReference>
<dbReference type="InterPro" id="IPR003846">
    <property type="entry name" value="SelO"/>
</dbReference>
<dbReference type="NCBIfam" id="NF040880">
    <property type="entry name" value="adnlytase_SelO"/>
    <property type="match status" value="1"/>
</dbReference>
<dbReference type="NCBIfam" id="NF000658">
    <property type="entry name" value="PRK00029.1"/>
    <property type="match status" value="1"/>
</dbReference>
<dbReference type="PANTHER" id="PTHR32057">
    <property type="entry name" value="PROTEIN ADENYLYLTRANSFERASE SELO, MITOCHONDRIAL"/>
    <property type="match status" value="1"/>
</dbReference>
<dbReference type="PANTHER" id="PTHR32057:SF14">
    <property type="entry name" value="PROTEIN ADENYLYLTRANSFERASE SELO, MITOCHONDRIAL"/>
    <property type="match status" value="1"/>
</dbReference>
<dbReference type="Pfam" id="PF02696">
    <property type="entry name" value="SelO"/>
    <property type="match status" value="1"/>
</dbReference>
<comment type="function">
    <text evidence="1">Nucleotidyltransferase involved in the post-translational modification of proteins. It can catalyze the addition of adenosine monophosphate (AMP) or uridine monophosphate (UMP) to a protein, resulting in modifications known as AMPylation and UMPylation.</text>
</comment>
<comment type="catalytic activity">
    <reaction evidence="1">
        <text>L-seryl-[protein] + ATP = 3-O-(5'-adenylyl)-L-seryl-[protein] + diphosphate</text>
        <dbReference type="Rhea" id="RHEA:58120"/>
        <dbReference type="Rhea" id="RHEA-COMP:9863"/>
        <dbReference type="Rhea" id="RHEA-COMP:15073"/>
        <dbReference type="ChEBI" id="CHEBI:29999"/>
        <dbReference type="ChEBI" id="CHEBI:30616"/>
        <dbReference type="ChEBI" id="CHEBI:33019"/>
        <dbReference type="ChEBI" id="CHEBI:142516"/>
        <dbReference type="EC" id="2.7.7.108"/>
    </reaction>
</comment>
<comment type="catalytic activity">
    <reaction evidence="1">
        <text>L-threonyl-[protein] + ATP = 3-O-(5'-adenylyl)-L-threonyl-[protein] + diphosphate</text>
        <dbReference type="Rhea" id="RHEA:54292"/>
        <dbReference type="Rhea" id="RHEA-COMP:11060"/>
        <dbReference type="Rhea" id="RHEA-COMP:13847"/>
        <dbReference type="ChEBI" id="CHEBI:30013"/>
        <dbReference type="ChEBI" id="CHEBI:30616"/>
        <dbReference type="ChEBI" id="CHEBI:33019"/>
        <dbReference type="ChEBI" id="CHEBI:138113"/>
        <dbReference type="EC" id="2.7.7.108"/>
    </reaction>
</comment>
<comment type="catalytic activity">
    <reaction evidence="1">
        <text>L-tyrosyl-[protein] + ATP = O-(5'-adenylyl)-L-tyrosyl-[protein] + diphosphate</text>
        <dbReference type="Rhea" id="RHEA:54288"/>
        <dbReference type="Rhea" id="RHEA-COMP:10136"/>
        <dbReference type="Rhea" id="RHEA-COMP:13846"/>
        <dbReference type="ChEBI" id="CHEBI:30616"/>
        <dbReference type="ChEBI" id="CHEBI:33019"/>
        <dbReference type="ChEBI" id="CHEBI:46858"/>
        <dbReference type="ChEBI" id="CHEBI:83624"/>
        <dbReference type="EC" id="2.7.7.108"/>
    </reaction>
</comment>
<comment type="catalytic activity">
    <reaction evidence="1">
        <text>L-histidyl-[protein] + UTP = N(tele)-(5'-uridylyl)-L-histidyl-[protein] + diphosphate</text>
        <dbReference type="Rhea" id="RHEA:83891"/>
        <dbReference type="Rhea" id="RHEA-COMP:9745"/>
        <dbReference type="Rhea" id="RHEA-COMP:20239"/>
        <dbReference type="ChEBI" id="CHEBI:29979"/>
        <dbReference type="ChEBI" id="CHEBI:33019"/>
        <dbReference type="ChEBI" id="CHEBI:46398"/>
        <dbReference type="ChEBI" id="CHEBI:233474"/>
    </reaction>
</comment>
<comment type="catalytic activity">
    <reaction evidence="1">
        <text>L-seryl-[protein] + UTP = O-(5'-uridylyl)-L-seryl-[protein] + diphosphate</text>
        <dbReference type="Rhea" id="RHEA:64604"/>
        <dbReference type="Rhea" id="RHEA-COMP:9863"/>
        <dbReference type="Rhea" id="RHEA-COMP:16635"/>
        <dbReference type="ChEBI" id="CHEBI:29999"/>
        <dbReference type="ChEBI" id="CHEBI:33019"/>
        <dbReference type="ChEBI" id="CHEBI:46398"/>
        <dbReference type="ChEBI" id="CHEBI:156051"/>
    </reaction>
</comment>
<comment type="catalytic activity">
    <reaction evidence="1">
        <text>L-tyrosyl-[protein] + UTP = O-(5'-uridylyl)-L-tyrosyl-[protein] + diphosphate</text>
        <dbReference type="Rhea" id="RHEA:83887"/>
        <dbReference type="Rhea" id="RHEA-COMP:10136"/>
        <dbReference type="Rhea" id="RHEA-COMP:20238"/>
        <dbReference type="ChEBI" id="CHEBI:33019"/>
        <dbReference type="ChEBI" id="CHEBI:46398"/>
        <dbReference type="ChEBI" id="CHEBI:46858"/>
        <dbReference type="ChEBI" id="CHEBI:90602"/>
    </reaction>
</comment>
<comment type="cofactor">
    <cofactor evidence="1">
        <name>Mg(2+)</name>
        <dbReference type="ChEBI" id="CHEBI:18420"/>
    </cofactor>
    <cofactor evidence="1">
        <name>Mn(2+)</name>
        <dbReference type="ChEBI" id="CHEBI:29035"/>
    </cofactor>
</comment>
<comment type="similarity">
    <text evidence="1">Belongs to the SELO family.</text>
</comment>
<name>SELO_ECO5E</name>
<sequence length="478" mass="54532">MTLSFITRWRDELPETYTALSPTPLNNARLIWHNTELANTLSIPSSLFKNGAGVWGGETLLPGMSPLAQVYSGHQFGVWAGQLGDGRGILLGEQLLADGTTMDWHLKGAGLTPYSRMGDGRAVLRSTIRESLASEAMHYLGIPTTRALSIVTSDSPVYRETVEPGAMLMRVAPSHLRFGHFEHFYYRREPDKVRQLADFAIRHYWSHLEDDEDKYRLWFNDVVARTASLIAQWQTVGFAHGVMNTDNMSLLGLTLDYGPFGFLNDYEPGFICNHSDHQGRYSFDNQPAVALWILQRLAQTLSPFVAVDALNEALDSYQQVLLTHYGQRMRQKLGFMTEQKEDNALLNELFSLMARERSDYTRTFRMLSLTEQHSAASPLRDEFIDRAAFDDWFARYRGRLQQDEVSDSERQQLMQSVNPALVLRNWLAQRAIEAAEKGDMTELHRLHEALRNPFSDRDDDYVSRPPDWGKRLEVSCSS</sequence>
<proteinExistence type="inferred from homology"/>
<organism>
    <name type="scientific">Escherichia coli O157:H7 (strain EC4115 / EHEC)</name>
    <dbReference type="NCBI Taxonomy" id="444450"/>
    <lineage>
        <taxon>Bacteria</taxon>
        <taxon>Pseudomonadati</taxon>
        <taxon>Pseudomonadota</taxon>
        <taxon>Gammaproteobacteria</taxon>
        <taxon>Enterobacterales</taxon>
        <taxon>Enterobacteriaceae</taxon>
        <taxon>Escherichia</taxon>
    </lineage>
</organism>
<keyword id="KW-0067">ATP-binding</keyword>
<keyword id="KW-0460">Magnesium</keyword>
<keyword id="KW-0464">Manganese</keyword>
<keyword id="KW-0479">Metal-binding</keyword>
<keyword id="KW-0547">Nucleotide-binding</keyword>
<keyword id="KW-0548">Nucleotidyltransferase</keyword>
<keyword id="KW-0808">Transferase</keyword>
<evidence type="ECO:0000255" key="1">
    <source>
        <dbReference type="HAMAP-Rule" id="MF_00692"/>
    </source>
</evidence>
<reference key="1">
    <citation type="journal article" date="2011" name="Proc. Natl. Acad. Sci. U.S.A.">
        <title>Genomic anatomy of Escherichia coli O157:H7 outbreaks.</title>
        <authorList>
            <person name="Eppinger M."/>
            <person name="Mammel M.K."/>
            <person name="Leclerc J.E."/>
            <person name="Ravel J."/>
            <person name="Cebula T.A."/>
        </authorList>
    </citation>
    <scope>NUCLEOTIDE SEQUENCE [LARGE SCALE GENOMIC DNA]</scope>
    <source>
        <strain>EC4115 / EHEC</strain>
    </source>
</reference>